<sequence length="204" mass="22292">MNPVVCAFGVIFVVVTLELVVAHPGKDVLGCHNGTSITVDECCAIPMLANKTVIEKCKAAHPFKPPQNTDDKGPRGHPGECIAECIMKGMGALKNEKVDGPAFRKAIEPVVKANPAFAKLLDDTVKQCHESINVDSEFTRYVTKPVCKADAKAFINCVYGTLFEQCPTNVWTQKDGCTQLKDKIKKGCAYFALRKHGGRRMRPT</sequence>
<protein>
    <recommendedName>
        <fullName>General odorant-binding protein 67</fullName>
    </recommendedName>
</protein>
<proteinExistence type="inferred from homology"/>
<gene>
    <name type="primary">Obp67</name>
    <name type="ORF">AGAP012659</name>
</gene>
<accession>Q5TXN1</accession>
<keyword id="KW-1015">Disulfide bond</keyword>
<keyword id="KW-0552">Olfaction</keyword>
<keyword id="KW-1185">Reference proteome</keyword>
<keyword id="KW-0964">Secreted</keyword>
<keyword id="KW-0716">Sensory transduction</keyword>
<keyword id="KW-0732">Signal</keyword>
<keyword id="KW-0813">Transport</keyword>
<reference key="1">
    <citation type="journal article" date="2002" name="Science">
        <title>The genome sequence of the malaria mosquito Anopheles gambiae.</title>
        <authorList>
            <person name="Holt R.A."/>
            <person name="Subramanian G.M."/>
            <person name="Halpern A."/>
            <person name="Sutton G.G."/>
            <person name="Charlab R."/>
            <person name="Nusskern D.R."/>
            <person name="Wincker P."/>
            <person name="Clark A.G."/>
            <person name="Ribeiro J.M.C."/>
            <person name="Wides R."/>
            <person name="Salzberg S.L."/>
            <person name="Loftus B.J."/>
            <person name="Yandell M.D."/>
            <person name="Majoros W.H."/>
            <person name="Rusch D.B."/>
            <person name="Lai Z."/>
            <person name="Kraft C.L."/>
            <person name="Abril J.F."/>
            <person name="Anthouard V."/>
            <person name="Arensburger P."/>
            <person name="Atkinson P.W."/>
            <person name="Baden H."/>
            <person name="de Berardinis V."/>
            <person name="Baldwin D."/>
            <person name="Benes V."/>
            <person name="Biedler J."/>
            <person name="Blass C."/>
            <person name="Bolanos R."/>
            <person name="Boscus D."/>
            <person name="Barnstead M."/>
            <person name="Cai S."/>
            <person name="Center A."/>
            <person name="Chaturverdi K."/>
            <person name="Christophides G.K."/>
            <person name="Chrystal M.A.M."/>
            <person name="Clamp M."/>
            <person name="Cravchik A."/>
            <person name="Curwen V."/>
            <person name="Dana A."/>
            <person name="Delcher A."/>
            <person name="Dew I."/>
            <person name="Evans C.A."/>
            <person name="Flanigan M."/>
            <person name="Grundschober-Freimoser A."/>
            <person name="Friedli L."/>
            <person name="Gu Z."/>
            <person name="Guan P."/>
            <person name="Guigo R."/>
            <person name="Hillenmeyer M.E."/>
            <person name="Hladun S.L."/>
            <person name="Hogan J.R."/>
            <person name="Hong Y.S."/>
            <person name="Hoover J."/>
            <person name="Jaillon O."/>
            <person name="Ke Z."/>
            <person name="Kodira C.D."/>
            <person name="Kokoza E."/>
            <person name="Koutsos A."/>
            <person name="Letunic I."/>
            <person name="Levitsky A.A."/>
            <person name="Liang Y."/>
            <person name="Lin J.-J."/>
            <person name="Lobo N.F."/>
            <person name="Lopez J.R."/>
            <person name="Malek J.A."/>
            <person name="McIntosh T.C."/>
            <person name="Meister S."/>
            <person name="Miller J.R."/>
            <person name="Mobarry C."/>
            <person name="Mongin E."/>
            <person name="Murphy S.D."/>
            <person name="O'Brochta D.A."/>
            <person name="Pfannkoch C."/>
            <person name="Qi R."/>
            <person name="Regier M.A."/>
            <person name="Remington K."/>
            <person name="Shao H."/>
            <person name="Sharakhova M.V."/>
            <person name="Sitter C.D."/>
            <person name="Shetty J."/>
            <person name="Smith T.J."/>
            <person name="Strong R."/>
            <person name="Sun J."/>
            <person name="Thomasova D."/>
            <person name="Ton L.Q."/>
            <person name="Topalis P."/>
            <person name="Tu Z.J."/>
            <person name="Unger M.F."/>
            <person name="Walenz B."/>
            <person name="Wang A.H."/>
            <person name="Wang J."/>
            <person name="Wang M."/>
            <person name="Wang X."/>
            <person name="Woodford K.J."/>
            <person name="Wortman J.R."/>
            <person name="Wu M."/>
            <person name="Yao A."/>
            <person name="Zdobnov E.M."/>
            <person name="Zhang H."/>
            <person name="Zhao Q."/>
            <person name="Zhao S."/>
            <person name="Zhu S.C."/>
            <person name="Zhimulev I."/>
            <person name="Coluzzi M."/>
            <person name="della Torre A."/>
            <person name="Roth C.W."/>
            <person name="Louis C."/>
            <person name="Kalush F."/>
            <person name="Mural R.J."/>
            <person name="Myers E.W."/>
            <person name="Adams M.D."/>
            <person name="Smith H.O."/>
            <person name="Broder S."/>
            <person name="Gardner M.J."/>
            <person name="Fraser C.M."/>
            <person name="Birney E."/>
            <person name="Bork P."/>
            <person name="Brey P.T."/>
            <person name="Venter J.C."/>
            <person name="Weissenbach J."/>
            <person name="Kafatos F.C."/>
            <person name="Collins F.H."/>
            <person name="Hoffman S.L."/>
        </authorList>
    </citation>
    <scope>NUCLEOTIDE SEQUENCE [LARGE SCALE GENOMIC DNA]</scope>
    <source>
        <strain>PEST</strain>
    </source>
</reference>
<reference key="2">
    <citation type="journal article" date="2013" name="Genome Biol. Evol.">
        <title>Comparative genomics of odorant binding proteins in Anopheles gambiae, Aedes aegypti, and Culex quinquefasciatus.</title>
        <authorList>
            <person name="Manoharan M."/>
            <person name="Ng Fuk Chong M."/>
            <person name="Vaitinadapoule A."/>
            <person name="Frumence E."/>
            <person name="Sowdhamini R."/>
            <person name="Offmann B."/>
        </authorList>
    </citation>
    <scope>IDENTIFICATION</scope>
</reference>
<name>OBP67_ANOGA</name>
<feature type="signal peptide" evidence="2">
    <location>
        <begin position="1"/>
        <end position="22"/>
    </location>
</feature>
<feature type="chain" id="PRO_0000430407" description="General odorant-binding protein 67">
    <location>
        <begin position="23"/>
        <end position="204"/>
    </location>
</feature>
<feature type="disulfide bond" evidence="1">
    <location>
        <begin position="57"/>
        <end position="85"/>
    </location>
</feature>
<feature type="disulfide bond" evidence="1">
    <location>
        <begin position="81"/>
        <end position="147"/>
    </location>
</feature>
<feature type="disulfide bond" evidence="1">
    <location>
        <begin position="128"/>
        <end position="157"/>
    </location>
</feature>
<organism>
    <name type="scientific">Anopheles gambiae</name>
    <name type="common">African malaria mosquito</name>
    <dbReference type="NCBI Taxonomy" id="7165"/>
    <lineage>
        <taxon>Eukaryota</taxon>
        <taxon>Metazoa</taxon>
        <taxon>Ecdysozoa</taxon>
        <taxon>Arthropoda</taxon>
        <taxon>Hexapoda</taxon>
        <taxon>Insecta</taxon>
        <taxon>Pterygota</taxon>
        <taxon>Neoptera</taxon>
        <taxon>Endopterygota</taxon>
        <taxon>Diptera</taxon>
        <taxon>Nematocera</taxon>
        <taxon>Culicoidea</taxon>
        <taxon>Culicidae</taxon>
        <taxon>Anophelinae</taxon>
        <taxon>Anopheles</taxon>
    </lineage>
</organism>
<dbReference type="EMBL" id="AAAB01007900">
    <property type="protein sequence ID" value="EAL42143.2"/>
    <property type="molecule type" value="Genomic_DNA"/>
</dbReference>
<dbReference type="RefSeq" id="XP_560792.4">
    <property type="nucleotide sequence ID" value="XM_560792.4"/>
</dbReference>
<dbReference type="SMR" id="Q5TXN1"/>
<dbReference type="FunCoup" id="Q5TXN1">
    <property type="interactions" value="13"/>
</dbReference>
<dbReference type="PaxDb" id="7165-AGAP012659-PA"/>
<dbReference type="EnsemblMetazoa" id="AGAP012659-RA">
    <property type="protein sequence ID" value="AGAP012659-PA"/>
    <property type="gene ID" value="AGAP012659"/>
</dbReference>
<dbReference type="GeneID" id="3292264"/>
<dbReference type="KEGG" id="aga:3292264"/>
<dbReference type="VEuPathDB" id="VectorBase:AGAMI1_013915"/>
<dbReference type="VEuPathDB" id="VectorBase:AGAP012659"/>
<dbReference type="HOGENOM" id="CLU_125128_0_0_1"/>
<dbReference type="InParanoid" id="Q5TXN1"/>
<dbReference type="OMA" id="VLARNCC"/>
<dbReference type="PhylomeDB" id="Q5TXN1"/>
<dbReference type="Proteomes" id="UP000007062">
    <property type="component" value="Unassembled WGS sequence"/>
</dbReference>
<dbReference type="GO" id="GO:0005576">
    <property type="term" value="C:extracellular region"/>
    <property type="evidence" value="ECO:0007669"/>
    <property type="project" value="UniProtKB-SubCell"/>
</dbReference>
<dbReference type="GO" id="GO:0005549">
    <property type="term" value="F:odorant binding"/>
    <property type="evidence" value="ECO:0007669"/>
    <property type="project" value="InterPro"/>
</dbReference>
<dbReference type="GO" id="GO:0007608">
    <property type="term" value="P:sensory perception of smell"/>
    <property type="evidence" value="ECO:0007669"/>
    <property type="project" value="UniProtKB-KW"/>
</dbReference>
<dbReference type="Gene3D" id="1.10.238.270">
    <property type="match status" value="1"/>
</dbReference>
<dbReference type="InterPro" id="IPR054577">
    <property type="entry name" value="OBP47-like_dom"/>
</dbReference>
<dbReference type="InterPro" id="IPR052295">
    <property type="entry name" value="Odorant-binding_protein"/>
</dbReference>
<dbReference type="InterPro" id="IPR036728">
    <property type="entry name" value="PBP_GOBP_sf"/>
</dbReference>
<dbReference type="PANTHER" id="PTHR21066:SF3">
    <property type="entry name" value="IP02236P"/>
    <property type="match status" value="1"/>
</dbReference>
<dbReference type="PANTHER" id="PTHR21066">
    <property type="entry name" value="ODORANT-BINDING PROTEIN 59A-RELATED"/>
    <property type="match status" value="1"/>
</dbReference>
<dbReference type="Pfam" id="PF22651">
    <property type="entry name" value="OBP47_like"/>
    <property type="match status" value="1"/>
</dbReference>
<dbReference type="SUPFAM" id="SSF47565">
    <property type="entry name" value="Insect pheromone/odorant-binding proteins"/>
    <property type="match status" value="1"/>
</dbReference>
<comment type="function">
    <text evidence="1">Present in the aqueous fluid surrounding olfactory sensory dendrites and are thought to aid in the capture and transport of hydrophobic odorants into and through this fluid.</text>
</comment>
<comment type="subcellular location">
    <subcellularLocation>
        <location evidence="1">Secreted</location>
    </subcellularLocation>
</comment>
<comment type="similarity">
    <text evidence="3">Belongs to the PBP/GOBP family.</text>
</comment>
<evidence type="ECO:0000250" key="1"/>
<evidence type="ECO:0000255" key="2"/>
<evidence type="ECO:0000305" key="3"/>